<organism>
    <name type="scientific">Staphylococcus aureus (strain MSSA476)</name>
    <dbReference type="NCBI Taxonomy" id="282459"/>
    <lineage>
        <taxon>Bacteria</taxon>
        <taxon>Bacillati</taxon>
        <taxon>Bacillota</taxon>
        <taxon>Bacilli</taxon>
        <taxon>Bacillales</taxon>
        <taxon>Staphylococcaceae</taxon>
        <taxon>Staphylococcus</taxon>
    </lineage>
</organism>
<protein>
    <recommendedName>
        <fullName>Poly-beta-1,6-N-acetyl-D-glucosamine N-deacetylase</fullName>
        <shortName>PNAG N-deacetylase</shortName>
        <shortName>Poly-beta-1,6-GlcNAc N-deacetylase</shortName>
        <ecNumber>3.5.1.-</ecNumber>
    </recommendedName>
    <alternativeName>
        <fullName>Biofilm polysaccharide intercellular adhesin deacetylase</fullName>
        <shortName>Biofilm PIA deacetylase</shortName>
    </alternativeName>
    <alternativeName>
        <fullName>Intercellular adhesion protein B</fullName>
    </alternativeName>
</protein>
<feature type="signal peptide" evidence="2">
    <location>
        <begin position="1"/>
        <end position="28"/>
    </location>
</feature>
<feature type="chain" id="PRO_0000024838" description="Poly-beta-1,6-N-acetyl-D-glucosamine N-deacetylase">
    <location>
        <begin position="29"/>
        <end position="290"/>
    </location>
</feature>
<feature type="domain" description="NodB homology" evidence="3">
    <location>
        <begin position="114"/>
        <end position="290"/>
    </location>
</feature>
<name>ICAB_STAAS</name>
<gene>
    <name type="primary">icaB</name>
    <name type="ordered locus">SAS2554</name>
</gene>
<keyword id="KW-0134">Cell wall</keyword>
<keyword id="KW-0378">Hydrolase</keyword>
<keyword id="KW-0964">Secreted</keyword>
<keyword id="KW-0732">Signal</keyword>
<accession>Q6G606</accession>
<comment type="function">
    <text evidence="1">Catalyzes the N-deacetylation of poly-beta-1,6-N-acetyl-D-glucosamine (PNAG, also referred to as PIA), a biofilm adhesin polysaccharide. N-deacetylation is crucial for attachment of the polysaccharide to the bacterial cell surface; it leads to the introduction of positive charges in the otherwise neutral PIA polymer, allowing electrostatic interactions (By similarity).</text>
</comment>
<comment type="subcellular location">
    <subcellularLocation>
        <location>Secreted</location>
        <location>Cell wall</location>
    </subcellularLocation>
    <text evidence="1">Attached to the cell surface.</text>
</comment>
<comment type="similarity">
    <text evidence="4">Belongs to the polysaccharide deacetylase family.</text>
</comment>
<dbReference type="EC" id="3.5.1.-"/>
<dbReference type="EMBL" id="BX571857">
    <property type="protein sequence ID" value="CAG44371.1"/>
    <property type="molecule type" value="Genomic_DNA"/>
</dbReference>
<dbReference type="RefSeq" id="WP_000877317.1">
    <property type="nucleotide sequence ID" value="NC_002953.3"/>
</dbReference>
<dbReference type="SMR" id="Q6G606"/>
<dbReference type="KEGG" id="sas:SAS2554"/>
<dbReference type="HOGENOM" id="CLU_030024_3_2_9"/>
<dbReference type="GO" id="GO:0005576">
    <property type="term" value="C:extracellular region"/>
    <property type="evidence" value="ECO:0007669"/>
    <property type="project" value="UniProtKB-KW"/>
</dbReference>
<dbReference type="GO" id="GO:0016811">
    <property type="term" value="F:hydrolase activity, acting on carbon-nitrogen (but not peptide) bonds, in linear amides"/>
    <property type="evidence" value="ECO:0007669"/>
    <property type="project" value="InterPro"/>
</dbReference>
<dbReference type="GO" id="GO:0005975">
    <property type="term" value="P:carbohydrate metabolic process"/>
    <property type="evidence" value="ECO:0007669"/>
    <property type="project" value="InterPro"/>
</dbReference>
<dbReference type="Gene3D" id="3.20.20.370">
    <property type="entry name" value="Glycoside hydrolase/deacetylase"/>
    <property type="match status" value="1"/>
</dbReference>
<dbReference type="InterPro" id="IPR011330">
    <property type="entry name" value="Glyco_hydro/deAcase_b/a-brl"/>
</dbReference>
<dbReference type="InterPro" id="IPR002509">
    <property type="entry name" value="NODB_dom"/>
</dbReference>
<dbReference type="InterPro" id="IPR023872">
    <property type="entry name" value="PNAG_deacetylase"/>
</dbReference>
<dbReference type="InterPro" id="IPR051398">
    <property type="entry name" value="Polysacch_Deacetylase"/>
</dbReference>
<dbReference type="NCBIfam" id="TIGR03933">
    <property type="entry name" value="PIA_icaB"/>
    <property type="match status" value="1"/>
</dbReference>
<dbReference type="PANTHER" id="PTHR34216">
    <property type="match status" value="1"/>
</dbReference>
<dbReference type="PANTHER" id="PTHR34216:SF3">
    <property type="entry name" value="POLY-BETA-1,6-N-ACETYL-D-GLUCOSAMINE N-DEACETYLASE"/>
    <property type="match status" value="1"/>
</dbReference>
<dbReference type="Pfam" id="PF01522">
    <property type="entry name" value="Polysacc_deac_1"/>
    <property type="match status" value="1"/>
</dbReference>
<dbReference type="SUPFAM" id="SSF88713">
    <property type="entry name" value="Glycoside hydrolase/deacetylase"/>
    <property type="match status" value="1"/>
</dbReference>
<dbReference type="PROSITE" id="PS51677">
    <property type="entry name" value="NODB"/>
    <property type="match status" value="1"/>
</dbReference>
<evidence type="ECO:0000250" key="1"/>
<evidence type="ECO:0000255" key="2"/>
<evidence type="ECO:0000255" key="3">
    <source>
        <dbReference type="PROSITE-ProRule" id="PRU01014"/>
    </source>
</evidence>
<evidence type="ECO:0000305" key="4"/>
<proteinExistence type="inferred from homology"/>
<reference key="1">
    <citation type="journal article" date="2004" name="Proc. Natl. Acad. Sci. U.S.A.">
        <title>Complete genomes of two clinical Staphylococcus aureus strains: evidence for the rapid evolution of virulence and drug resistance.</title>
        <authorList>
            <person name="Holden M.T.G."/>
            <person name="Feil E.J."/>
            <person name="Lindsay J.A."/>
            <person name="Peacock S.J."/>
            <person name="Day N.P.J."/>
            <person name="Enright M.C."/>
            <person name="Foster T.J."/>
            <person name="Moore C.E."/>
            <person name="Hurst L."/>
            <person name="Atkin R."/>
            <person name="Barron A."/>
            <person name="Bason N."/>
            <person name="Bentley S.D."/>
            <person name="Chillingworth C."/>
            <person name="Chillingworth T."/>
            <person name="Churcher C."/>
            <person name="Clark L."/>
            <person name="Corton C."/>
            <person name="Cronin A."/>
            <person name="Doggett J."/>
            <person name="Dowd L."/>
            <person name="Feltwell T."/>
            <person name="Hance Z."/>
            <person name="Harris B."/>
            <person name="Hauser H."/>
            <person name="Holroyd S."/>
            <person name="Jagels K."/>
            <person name="James K.D."/>
            <person name="Lennard N."/>
            <person name="Line A."/>
            <person name="Mayes R."/>
            <person name="Moule S."/>
            <person name="Mungall K."/>
            <person name="Ormond D."/>
            <person name="Quail M.A."/>
            <person name="Rabbinowitsch E."/>
            <person name="Rutherford K.M."/>
            <person name="Sanders M."/>
            <person name="Sharp S."/>
            <person name="Simmonds M."/>
            <person name="Stevens K."/>
            <person name="Whitehead S."/>
            <person name="Barrell B.G."/>
            <person name="Spratt B.G."/>
            <person name="Parkhill J."/>
        </authorList>
    </citation>
    <scope>NUCLEOTIDE SEQUENCE [LARGE SCALE GENOMIC DNA]</scope>
    <source>
        <strain>MSSA476</strain>
    </source>
</reference>
<sequence length="290" mass="34105">MKYRKFIILVLSILIILPVSTLDGHHIANADDDSPKKLKYKENSALALNYHRVRKANFLNNFIYFFSSSKEIKNYSVSQSQFESQIKWLKSHDAKFLTLKEFLYYKKKGKFPKRSVWINFDDMDETIYENAYPILKKYKIPATGFIITGHVGEENFHNLDMISKKELKEMYKTGLWEFETHTHDLHNLSKNNKSKLMKASEATIIKDLNKSEKYLTKNFKKSQKTIAYPYGLMNDDKLPVIKKAGLKYGFSLEEKAVTPNSNDYYIPRILISDDAFEHLIKRWDGFHEKD</sequence>